<reference key="1">
    <citation type="journal article" date="1992" name="J. Gen. Virol.">
        <title>Comparisons of the genomic sequences of erysimum latent virus and other tymoviruses: a search for the molecular basis of their host specificities.</title>
        <authorList>
            <person name="Srifah P."/>
            <person name="Keese P."/>
            <person name="Weiller G."/>
            <person name="Gibbs A."/>
        </authorList>
    </citation>
    <scope>NUCLEOTIDE SEQUENCE</scope>
</reference>
<accession>P35928</accession>
<proteinExistence type="inferred from homology"/>
<protein>
    <recommendedName>
        <fullName evidence="8">Non-structural replication polyprotein</fullName>
    </recommendedName>
    <component>
        <recommendedName>
            <fullName>Methyltransferase/Protease</fullName>
            <ecNumber>2.1.1.-</ecNumber>
            <ecNumber>3.4.22.-</ecNumber>
        </recommendedName>
        <alternativeName>
            <fullName>MET/PRO</fullName>
        </alternativeName>
    </component>
    <component>
        <recommendedName>
            <fullName>Putative helicase</fullName>
            <ecNumber>3.6.4.-</ecNumber>
        </recommendedName>
        <alternativeName>
            <fullName>HEL</fullName>
        </alternativeName>
    </component>
    <component>
        <recommendedName>
            <fullName>RNA-directed RNA polymerase</fullName>
            <ecNumber>2.7.7.48</ecNumber>
        </recommendedName>
        <alternativeName>
            <fullName>POL</fullName>
        </alternativeName>
    </component>
</protein>
<organism>
    <name type="scientific">Erysimum latent virus</name>
    <name type="common">ELV</name>
    <dbReference type="NCBI Taxonomy" id="12152"/>
    <lineage>
        <taxon>Viruses</taxon>
        <taxon>Riboviria</taxon>
        <taxon>Orthornavirae</taxon>
        <taxon>Kitrinoviricota</taxon>
        <taxon>Alsuviricetes</taxon>
        <taxon>Tymovirales</taxon>
        <taxon>Tymoviridae</taxon>
        <taxon>Tymovirus</taxon>
        <taxon>Tymovirus erysimi</taxon>
    </lineage>
</organism>
<feature type="chain" id="PRO_0000222933" description="Non-structural replication polyprotein">
    <location>
        <begin position="1"/>
        <end position="1748"/>
    </location>
</feature>
<feature type="chain" id="PRO_0000460982" description="Methyltransferase/Protease">
    <location>
        <begin position="1"/>
        <end position="775" status="uncertain"/>
    </location>
</feature>
<feature type="chain" id="PRO_0000460983" description="Putative helicase" evidence="3">
    <location>
        <begin position="776" status="uncertain"/>
        <end position="1156" status="uncertain"/>
    </location>
</feature>
<feature type="chain" id="PRO_0000460984" description="RNA-directed RNA polymerase">
    <location>
        <begin position="1157" status="uncertain"/>
        <end position="1748"/>
    </location>
</feature>
<feature type="domain" description="Alphavirus-like MT" evidence="6">
    <location>
        <begin position="58"/>
        <end position="219"/>
    </location>
</feature>
<feature type="domain" description="Peptidase C21" evidence="5">
    <location>
        <begin position="627"/>
        <end position="781"/>
    </location>
</feature>
<feature type="domain" description="(+)RNA virus helicase ATP-binding">
    <location>
        <begin position="844"/>
        <end position="1001"/>
    </location>
</feature>
<feature type="domain" description="(+)RNA virus helicase C-terminal">
    <location>
        <begin position="1002"/>
        <end position="1138"/>
    </location>
</feature>
<feature type="domain" description="RdRp catalytic" evidence="4">
    <location>
        <begin position="1474"/>
        <end position="1580"/>
    </location>
</feature>
<feature type="region of interest" description="Disordered" evidence="7">
    <location>
        <begin position="433"/>
        <end position="507"/>
    </location>
</feature>
<feature type="region of interest" description="Disordered" evidence="7">
    <location>
        <begin position="569"/>
        <end position="633"/>
    </location>
</feature>
<feature type="region of interest" description="Disordered" evidence="7">
    <location>
        <begin position="767"/>
        <end position="786"/>
    </location>
</feature>
<feature type="compositionally biased region" description="Low complexity" evidence="7">
    <location>
        <begin position="458"/>
        <end position="475"/>
    </location>
</feature>
<feature type="compositionally biased region" description="Polar residues" evidence="7">
    <location>
        <begin position="491"/>
        <end position="500"/>
    </location>
</feature>
<feature type="compositionally biased region" description="Pro residues" evidence="7">
    <location>
        <begin position="579"/>
        <end position="600"/>
    </location>
</feature>
<feature type="compositionally biased region" description="Low complexity" evidence="7">
    <location>
        <begin position="601"/>
        <end position="616"/>
    </location>
</feature>
<feature type="active site" description="For protease activity" evidence="5">
    <location>
        <position position="680"/>
    </location>
</feature>
<feature type="active site" description="For protease activity" evidence="5">
    <location>
        <position position="766"/>
    </location>
</feature>
<feature type="binding site" evidence="1">
    <location>
        <begin position="874"/>
        <end position="881"/>
    </location>
    <ligand>
        <name>ATP</name>
        <dbReference type="ChEBI" id="CHEBI:30616"/>
    </ligand>
</feature>
<feature type="site" description="Cleavage; by viral protease" evidence="2">
    <location>
        <begin position="775"/>
        <end position="776"/>
    </location>
</feature>
<feature type="site" description="Cleavage; by viral protease" evidence="2">
    <location>
        <begin position="1156"/>
        <end position="1157"/>
    </location>
</feature>
<sequence length="1748" mass="193908">MAFQLALDALSSTTHRDSISAPLLDSSVSQLQSSLELFPYTVPKELVPQLNRMGIQVSGLTSTPHPHAAHKTLELNLLFNHWAKSCNVDSAVVFMKPSKFFKLQEKNSHFKSLHNYRLHPHDSNRYPHPSTSLPTEKRFYIHDSLMYFTPHQISGLFESCPNLLSLYASLVVPPESSMTDLSLNPDLYRYSIHKSTLHYTPEGHSAGSYNQPVNALDWLKISAIQTPSLSLSVSVLESWGPLHSLLIERSSQTQNPDSQKIKDLISFQTPQALILPNPDSLAVPLRHRLVPQKTYDALFTYTRATRTLRTSDPAGFVRTQSNKPEFNWVTSQAWDNLQTYALLTASYRPPVSYTLHRSPLTKLKELLTRNALKLAAMASPALTLAIFTTMTALNTNSSKALSFSALKIHLLNPLTGPELLHFQTSVLQQKNSAPLSQAEAKQELDKSAVPAPSEHDSSASQSTSLSLSASSQLLSTEKHPGSELSSKAIPVSTSCPSASKQLAPPLTAESHSSVNALLRKFLGPNSPQSNLDNYNLHLHPESFTLGWKRRPLLLDSHSSFLPSSCLQPPASPSIAAAPHPLPPAQKPPRPPTTVPTPKPLASPSQTQAAQPATQSPPSIPQTAPVTSLLPAPLETDDSCAGPISTFQDLFPASYYPHTANFPCRSKIPGYLEAPYPPLDCMLVALSAQMPQSPQELWSALNTLMPLSALTSPSLRVLGLGTEELTALSYYYHFQAEIHSDNEIYRFGIQTASTKLCLIRDSGPPAHFTAPDPLRAGSPPSRSQTNENSLRRSLLGFRLNGNLLPIDQVHSFTSEPSRAKNLASNMKNGFDGILTTLAALSSLSSGPSPRDRIFTLDGICDFALPKTVDLIHLSGFAGCGKTHPIQQLLKTPHFHNFRVVTPTTNLRSEWKSDMALPAHHNWRFSTWESALLKHAEILVIDEIYKLPRGYLDLSLIADPTVKLVILLGDPLQGEYHSTSAHSSNLRLSSEIPRLLPFIDYYCYWSYRVPKCVAKLFSLPCFNPSEGFIKTTLDFFPSANNLVNSHSVVHISEACGWNAVTISSSQGCTFSDPAFIHLDRNTALLSPSNCLVALTRSRSGVYFKGDFTFLSSLSGSSRMFSLAYSGQPIHLPDFFPEIVFQLNMITAPLTKRSSSFRSGFQPNISSAPKIPAPPNLPCPPHIPTNYSKDVIVNNQALYGESLERRLSVLHLPPTRMTLHSDINITAPSSSSFQPSDEPVPSDHTAVYPGFDFFTLAAHFLPAHDPEVKEIELKDQTSQQFPWLNLDFHISCQTSSLISARHQPGSDSTLLPASLHKRLRFRPTAAPYQITPSDSFLGNCLYRSWCQVYRRDPNVRLPFNEALFLECIAVNDYAQLSSKTQATIVANASRSDPDWRHTFVKIFAKSQHKVNDGSIFGPWKACQTLALMHDYVILTLGPVKKYQRLFDQLERPSHIYYHAGNTPHDLRRWCSKHLETSHCTTNDYTAFDQSQHGEAVVFEVLKMRRLSIPENLISLHVHLKTNVETQFGPLTCMRLTGEPGTYDDNTDYNLAVLNLQYDLRKTPTLVSGDDSYLSGTLSPRSNWPFVKELLHLRLKPSSLIDGLFCGYYLGPQGCIRNPLALFAKLMIAEDDGSAFDKLPSYLTEFSIGHGLGDSLWQLLPSDLVLYQSACFDYFCRKATRSQKILLQPGLVDQETLDKIALSAKFISRPFYSMLSSHARSLISTKFKLDSSLTTLQDPMVEFELLPFSNVQ</sequence>
<dbReference type="EC" id="2.1.1.-"/>
<dbReference type="EC" id="3.4.22.-"/>
<dbReference type="EC" id="3.6.4.-"/>
<dbReference type="EC" id="2.7.7.48"/>
<dbReference type="PIR" id="JQ1555">
    <property type="entry name" value="JQ1555"/>
</dbReference>
<dbReference type="RefSeq" id="NP_047920.1">
    <property type="nucleotide sequence ID" value="NC_001977.1"/>
</dbReference>
<dbReference type="GeneID" id="1493964"/>
<dbReference type="KEGG" id="vg:1493964"/>
<dbReference type="GO" id="GO:0005524">
    <property type="term" value="F:ATP binding"/>
    <property type="evidence" value="ECO:0007669"/>
    <property type="project" value="UniProtKB-KW"/>
</dbReference>
<dbReference type="GO" id="GO:0004197">
    <property type="term" value="F:cysteine-type endopeptidase activity"/>
    <property type="evidence" value="ECO:0007669"/>
    <property type="project" value="InterPro"/>
</dbReference>
<dbReference type="GO" id="GO:0008174">
    <property type="term" value="F:mRNA methyltransferase activity"/>
    <property type="evidence" value="ECO:0007669"/>
    <property type="project" value="InterPro"/>
</dbReference>
<dbReference type="GO" id="GO:0003723">
    <property type="term" value="F:RNA binding"/>
    <property type="evidence" value="ECO:0007669"/>
    <property type="project" value="InterPro"/>
</dbReference>
<dbReference type="GO" id="GO:0003968">
    <property type="term" value="F:RNA-directed RNA polymerase activity"/>
    <property type="evidence" value="ECO:0007669"/>
    <property type="project" value="UniProtKB-KW"/>
</dbReference>
<dbReference type="GO" id="GO:0006351">
    <property type="term" value="P:DNA-templated transcription"/>
    <property type="evidence" value="ECO:0007669"/>
    <property type="project" value="InterPro"/>
</dbReference>
<dbReference type="GO" id="GO:0032259">
    <property type="term" value="P:methylation"/>
    <property type="evidence" value="ECO:0007669"/>
    <property type="project" value="UniProtKB-KW"/>
</dbReference>
<dbReference type="GO" id="GO:0016556">
    <property type="term" value="P:mRNA modification"/>
    <property type="evidence" value="ECO:0007669"/>
    <property type="project" value="InterPro"/>
</dbReference>
<dbReference type="GO" id="GO:0006508">
    <property type="term" value="P:proteolysis"/>
    <property type="evidence" value="ECO:0007669"/>
    <property type="project" value="UniProtKB-KW"/>
</dbReference>
<dbReference type="GO" id="GO:0006396">
    <property type="term" value="P:RNA processing"/>
    <property type="evidence" value="ECO:0007669"/>
    <property type="project" value="InterPro"/>
</dbReference>
<dbReference type="GO" id="GO:0039648">
    <property type="term" value="P:symbiont-mediated perturbation of host ubiquitin-like protein modification"/>
    <property type="evidence" value="ECO:0007669"/>
    <property type="project" value="UniProtKB-KW"/>
</dbReference>
<dbReference type="GO" id="GO:0039694">
    <property type="term" value="P:viral RNA genome replication"/>
    <property type="evidence" value="ECO:0007669"/>
    <property type="project" value="InterPro"/>
</dbReference>
<dbReference type="CDD" id="cd23247">
    <property type="entry name" value="Tymoviridae_RdRp"/>
    <property type="match status" value="1"/>
</dbReference>
<dbReference type="Gene3D" id="3.90.70.100">
    <property type="match status" value="1"/>
</dbReference>
<dbReference type="Gene3D" id="3.40.50.300">
    <property type="entry name" value="P-loop containing nucleotide triphosphate hydrolases"/>
    <property type="match status" value="1"/>
</dbReference>
<dbReference type="InterPro" id="IPR027351">
    <property type="entry name" value="(+)RNA_virus_helicase_core_dom"/>
</dbReference>
<dbReference type="InterPro" id="IPR002588">
    <property type="entry name" value="Alphavirus-like_MT_dom"/>
</dbReference>
<dbReference type="InterPro" id="IPR043502">
    <property type="entry name" value="DNA/RNA_pol_sf"/>
</dbReference>
<dbReference type="InterPro" id="IPR027417">
    <property type="entry name" value="P-loop_NTPase"/>
</dbReference>
<dbReference type="InterPro" id="IPR008043">
    <property type="entry name" value="Peptidase_C21"/>
</dbReference>
<dbReference type="InterPro" id="IPR001788">
    <property type="entry name" value="RNA-dep_RNA_pol_alsuvir"/>
</dbReference>
<dbReference type="InterPro" id="IPR007094">
    <property type="entry name" value="RNA-dir_pol_PSvirus"/>
</dbReference>
<dbReference type="InterPro" id="IPR043629">
    <property type="entry name" value="Salyut_dom"/>
</dbReference>
<dbReference type="InterPro" id="IPR043181">
    <property type="entry name" value="TYMV_endopept_dom"/>
</dbReference>
<dbReference type="Pfam" id="PF05381">
    <property type="entry name" value="Peptidase_C21"/>
    <property type="match status" value="1"/>
</dbReference>
<dbReference type="Pfam" id="PF00978">
    <property type="entry name" value="RdRP_2"/>
    <property type="match status" value="1"/>
</dbReference>
<dbReference type="Pfam" id="PF19227">
    <property type="entry name" value="Salyut"/>
    <property type="match status" value="1"/>
</dbReference>
<dbReference type="Pfam" id="PF01443">
    <property type="entry name" value="Viral_helicase1"/>
    <property type="match status" value="1"/>
</dbReference>
<dbReference type="Pfam" id="PF01660">
    <property type="entry name" value="Vmethyltransf"/>
    <property type="match status" value="1"/>
</dbReference>
<dbReference type="SUPFAM" id="SSF56672">
    <property type="entry name" value="DNA/RNA polymerases"/>
    <property type="match status" value="1"/>
</dbReference>
<dbReference type="SUPFAM" id="SSF52540">
    <property type="entry name" value="P-loop containing nucleoside triphosphate hydrolases"/>
    <property type="match status" value="1"/>
</dbReference>
<dbReference type="PROSITE" id="PS51743">
    <property type="entry name" value="ALPHAVIRUS_MT"/>
    <property type="match status" value="1"/>
</dbReference>
<dbReference type="PROSITE" id="PS51738">
    <property type="entry name" value="PEPTIDASE_C21"/>
    <property type="match status" value="1"/>
</dbReference>
<dbReference type="PROSITE" id="PS51657">
    <property type="entry name" value="PSRV_HELICASE"/>
    <property type="match status" value="1"/>
</dbReference>
<dbReference type="PROSITE" id="PS50507">
    <property type="entry name" value="RDRP_SSRNA_POS"/>
    <property type="match status" value="1"/>
</dbReference>
<organismHost>
    <name type="scientific">Erysimum</name>
    <dbReference type="NCBI Taxonomy" id="65352"/>
</organismHost>
<name>POLN_ELV</name>
<evidence type="ECO:0000250" key="1"/>
<evidence type="ECO:0000250" key="2">
    <source>
        <dbReference type="UniProtKB" id="P10358"/>
    </source>
</evidence>
<evidence type="ECO:0000250" key="3">
    <source>
        <dbReference type="UniProtKB" id="Q91TW9"/>
    </source>
</evidence>
<evidence type="ECO:0000255" key="4">
    <source>
        <dbReference type="PROSITE-ProRule" id="PRU00539"/>
    </source>
</evidence>
<evidence type="ECO:0000255" key="5">
    <source>
        <dbReference type="PROSITE-ProRule" id="PRU01074"/>
    </source>
</evidence>
<evidence type="ECO:0000255" key="6">
    <source>
        <dbReference type="PROSITE-ProRule" id="PRU01079"/>
    </source>
</evidence>
<evidence type="ECO:0000256" key="7">
    <source>
        <dbReference type="SAM" id="MobiDB-lite"/>
    </source>
</evidence>
<evidence type="ECO:0000305" key="8"/>
<keyword id="KW-0067">ATP-binding</keyword>
<keyword id="KW-0945">Host-virus interaction</keyword>
<keyword id="KW-0378">Hydrolase</keyword>
<keyword id="KW-0489">Methyltransferase</keyword>
<keyword id="KW-1127">Modulation of host ubiquitin pathway by viral deubiquitinase</keyword>
<keyword id="KW-1130">Modulation of host ubiquitin pathway by virus</keyword>
<keyword id="KW-0511">Multifunctional enzyme</keyword>
<keyword id="KW-0547">Nucleotide-binding</keyword>
<keyword id="KW-0548">Nucleotidyltransferase</keyword>
<keyword id="KW-0645">Protease</keyword>
<keyword id="KW-0696">RNA-directed RNA polymerase</keyword>
<keyword id="KW-0788">Thiol protease</keyword>
<keyword id="KW-0808">Transferase</keyword>
<keyword id="KW-0693">Viral RNA replication</keyword>
<comment type="function">
    <molecule>Methyltransferase/Protease</molecule>
    <text evidence="2 3">Acts as a cysteine protease, methyltransferase and deubiquitinase (By similarity). The cysteine protease activity cleaves the polyprotein giving rise to mature proteins (By similarity). The methyltransferase domain is probably involved in viral RNA capping (By similarity).</text>
</comment>
<comment type="function">
    <molecule>RNA-directed RNA polymerase</molecule>
    <text evidence="2">RNA-directed RNA polymerase is responsible for the replication and transcription of the genome.</text>
</comment>
<comment type="catalytic activity">
    <molecule>RNA-directed RNA polymerase</molecule>
    <reaction evidence="4">
        <text>RNA(n) + a ribonucleoside 5'-triphosphate = RNA(n+1) + diphosphate</text>
        <dbReference type="Rhea" id="RHEA:21248"/>
        <dbReference type="Rhea" id="RHEA-COMP:14527"/>
        <dbReference type="Rhea" id="RHEA-COMP:17342"/>
        <dbReference type="ChEBI" id="CHEBI:33019"/>
        <dbReference type="ChEBI" id="CHEBI:61557"/>
        <dbReference type="ChEBI" id="CHEBI:140395"/>
        <dbReference type="EC" id="2.7.7.48"/>
    </reaction>
</comment>
<comment type="PTM">
    <text evidence="3">Specific enzymatic cleavages by the host yield mature proteins.</text>
</comment>
<comment type="similarity">
    <text evidence="8">Belongs to the Tymoviridae non-structural replication polyprotein family.</text>
</comment>